<accession>Q6G091</accession>
<protein>
    <recommendedName>
        <fullName evidence="1">4-hydroxy-tetrahydrodipicolinate synthase</fullName>
        <shortName evidence="1">HTPA synthase</shortName>
        <ecNumber evidence="1">4.3.3.7</ecNumber>
    </recommendedName>
</protein>
<dbReference type="EC" id="4.3.3.7" evidence="1"/>
<dbReference type="EMBL" id="BX897700">
    <property type="protein sequence ID" value="CAF25918.1"/>
    <property type="molecule type" value="Genomic_DNA"/>
</dbReference>
<dbReference type="RefSeq" id="WP_011179207.1">
    <property type="nucleotide sequence ID" value="NC_005955.1"/>
</dbReference>
<dbReference type="SMR" id="Q6G091"/>
<dbReference type="KEGG" id="bqu:BQ04190"/>
<dbReference type="eggNOG" id="COG0329">
    <property type="taxonomic scope" value="Bacteria"/>
</dbReference>
<dbReference type="HOGENOM" id="CLU_049343_7_1_5"/>
<dbReference type="OrthoDB" id="9782828at2"/>
<dbReference type="UniPathway" id="UPA00034">
    <property type="reaction ID" value="UER00017"/>
</dbReference>
<dbReference type="Proteomes" id="UP000000597">
    <property type="component" value="Chromosome"/>
</dbReference>
<dbReference type="GO" id="GO:0005829">
    <property type="term" value="C:cytosol"/>
    <property type="evidence" value="ECO:0007669"/>
    <property type="project" value="TreeGrafter"/>
</dbReference>
<dbReference type="GO" id="GO:0008840">
    <property type="term" value="F:4-hydroxy-tetrahydrodipicolinate synthase activity"/>
    <property type="evidence" value="ECO:0007669"/>
    <property type="project" value="UniProtKB-UniRule"/>
</dbReference>
<dbReference type="GO" id="GO:0019877">
    <property type="term" value="P:diaminopimelate biosynthetic process"/>
    <property type="evidence" value="ECO:0007669"/>
    <property type="project" value="UniProtKB-UniRule"/>
</dbReference>
<dbReference type="GO" id="GO:0009089">
    <property type="term" value="P:lysine biosynthetic process via diaminopimelate"/>
    <property type="evidence" value="ECO:0007669"/>
    <property type="project" value="UniProtKB-UniRule"/>
</dbReference>
<dbReference type="CDD" id="cd00950">
    <property type="entry name" value="DHDPS"/>
    <property type="match status" value="1"/>
</dbReference>
<dbReference type="Gene3D" id="3.20.20.70">
    <property type="entry name" value="Aldolase class I"/>
    <property type="match status" value="1"/>
</dbReference>
<dbReference type="HAMAP" id="MF_00418">
    <property type="entry name" value="DapA"/>
    <property type="match status" value="1"/>
</dbReference>
<dbReference type="InterPro" id="IPR013785">
    <property type="entry name" value="Aldolase_TIM"/>
</dbReference>
<dbReference type="InterPro" id="IPR005263">
    <property type="entry name" value="DapA"/>
</dbReference>
<dbReference type="InterPro" id="IPR002220">
    <property type="entry name" value="DapA-like"/>
</dbReference>
<dbReference type="InterPro" id="IPR020625">
    <property type="entry name" value="Schiff_base-form_aldolases_AS"/>
</dbReference>
<dbReference type="NCBIfam" id="TIGR00674">
    <property type="entry name" value="dapA"/>
    <property type="match status" value="1"/>
</dbReference>
<dbReference type="PANTHER" id="PTHR12128:SF66">
    <property type="entry name" value="4-HYDROXY-2-OXOGLUTARATE ALDOLASE, MITOCHONDRIAL"/>
    <property type="match status" value="1"/>
</dbReference>
<dbReference type="PANTHER" id="PTHR12128">
    <property type="entry name" value="DIHYDRODIPICOLINATE SYNTHASE"/>
    <property type="match status" value="1"/>
</dbReference>
<dbReference type="Pfam" id="PF00701">
    <property type="entry name" value="DHDPS"/>
    <property type="match status" value="1"/>
</dbReference>
<dbReference type="PIRSF" id="PIRSF001365">
    <property type="entry name" value="DHDPS"/>
    <property type="match status" value="1"/>
</dbReference>
<dbReference type="PRINTS" id="PR00146">
    <property type="entry name" value="DHPICSNTHASE"/>
</dbReference>
<dbReference type="SMART" id="SM01130">
    <property type="entry name" value="DHDPS"/>
    <property type="match status" value="1"/>
</dbReference>
<dbReference type="SUPFAM" id="SSF51569">
    <property type="entry name" value="Aldolase"/>
    <property type="match status" value="1"/>
</dbReference>
<dbReference type="PROSITE" id="PS00666">
    <property type="entry name" value="DHDPS_2"/>
    <property type="match status" value="1"/>
</dbReference>
<reference key="1">
    <citation type="journal article" date="2004" name="Proc. Natl. Acad. Sci. U.S.A.">
        <title>The louse-borne human pathogen Bartonella quintana is a genomic derivative of the zoonotic agent Bartonella henselae.</title>
        <authorList>
            <person name="Alsmark U.C.M."/>
            <person name="Frank A.C."/>
            <person name="Karlberg E.O."/>
            <person name="Legault B.-A."/>
            <person name="Ardell D.H."/>
            <person name="Canbaeck B."/>
            <person name="Eriksson A.-S."/>
            <person name="Naeslund A.K."/>
            <person name="Handley S.A."/>
            <person name="Huvet M."/>
            <person name="La Scola B."/>
            <person name="Holmberg M."/>
            <person name="Andersson S.G.E."/>
        </authorList>
    </citation>
    <scope>NUCLEOTIDE SEQUENCE [LARGE SCALE GENOMIC DNA]</scope>
    <source>
        <strain>Toulouse</strain>
    </source>
</reference>
<keyword id="KW-0028">Amino-acid biosynthesis</keyword>
<keyword id="KW-0963">Cytoplasm</keyword>
<keyword id="KW-0220">Diaminopimelate biosynthesis</keyword>
<keyword id="KW-0456">Lyase</keyword>
<keyword id="KW-0457">Lysine biosynthesis</keyword>
<keyword id="KW-0704">Schiff base</keyword>
<name>DAPA_BARQU</name>
<sequence>MLKGAVTALITPFDDNGAIDEKAFCNFVEWQITQGINGVSPVGTTGESPTLSHEERKQVVELCVEQVAKRVPVVAGAGSNSTSEAVELAQHAEKAGADAILVVTPYYNKPNQKGLYTHFSSIAKAISIPVIIYNIPGRSVIDMAVETMRDLCQDFKNIIGVKDATSKIGRVSEQREKCGKDFIQLSGDDCIALGFNAHGGVGCISVSSNVAPKLCAELHAACFRGDYETALKLNDLLMPLNRAVFIEPSPAGIKYAAAKLGLCGSLVRSPIVPLAETTKKIIDAALHHAGLLKE</sequence>
<feature type="chain" id="PRO_1000050167" description="4-hydroxy-tetrahydrodipicolinate synthase">
    <location>
        <begin position="1"/>
        <end position="294"/>
    </location>
</feature>
<feature type="active site" description="Proton donor/acceptor" evidence="1">
    <location>
        <position position="133"/>
    </location>
</feature>
<feature type="active site" description="Schiff-base intermediate with substrate" evidence="1">
    <location>
        <position position="162"/>
    </location>
</feature>
<feature type="binding site" evidence="1">
    <location>
        <position position="45"/>
    </location>
    <ligand>
        <name>pyruvate</name>
        <dbReference type="ChEBI" id="CHEBI:15361"/>
    </ligand>
</feature>
<feature type="binding site" evidence="1">
    <location>
        <position position="204"/>
    </location>
    <ligand>
        <name>pyruvate</name>
        <dbReference type="ChEBI" id="CHEBI:15361"/>
    </ligand>
</feature>
<feature type="site" description="Part of a proton relay during catalysis" evidence="1">
    <location>
        <position position="44"/>
    </location>
</feature>
<feature type="site" description="Part of a proton relay during catalysis" evidence="1">
    <location>
        <position position="107"/>
    </location>
</feature>
<proteinExistence type="inferred from homology"/>
<organism>
    <name type="scientific">Bartonella quintana (strain Toulouse)</name>
    <name type="common">Rochalimaea quintana</name>
    <dbReference type="NCBI Taxonomy" id="283165"/>
    <lineage>
        <taxon>Bacteria</taxon>
        <taxon>Pseudomonadati</taxon>
        <taxon>Pseudomonadota</taxon>
        <taxon>Alphaproteobacteria</taxon>
        <taxon>Hyphomicrobiales</taxon>
        <taxon>Bartonellaceae</taxon>
        <taxon>Bartonella</taxon>
    </lineage>
</organism>
<evidence type="ECO:0000255" key="1">
    <source>
        <dbReference type="HAMAP-Rule" id="MF_00418"/>
    </source>
</evidence>
<evidence type="ECO:0000305" key="2"/>
<comment type="function">
    <text evidence="1">Catalyzes the condensation of (S)-aspartate-beta-semialdehyde [(S)-ASA] and pyruvate to 4-hydroxy-tetrahydrodipicolinate (HTPA).</text>
</comment>
<comment type="catalytic activity">
    <reaction evidence="1">
        <text>L-aspartate 4-semialdehyde + pyruvate = (2S,4S)-4-hydroxy-2,3,4,5-tetrahydrodipicolinate + H2O + H(+)</text>
        <dbReference type="Rhea" id="RHEA:34171"/>
        <dbReference type="ChEBI" id="CHEBI:15361"/>
        <dbReference type="ChEBI" id="CHEBI:15377"/>
        <dbReference type="ChEBI" id="CHEBI:15378"/>
        <dbReference type="ChEBI" id="CHEBI:67139"/>
        <dbReference type="ChEBI" id="CHEBI:537519"/>
        <dbReference type="EC" id="4.3.3.7"/>
    </reaction>
</comment>
<comment type="pathway">
    <text evidence="1">Amino-acid biosynthesis; L-lysine biosynthesis via DAP pathway; (S)-tetrahydrodipicolinate from L-aspartate: step 3/4.</text>
</comment>
<comment type="subunit">
    <text evidence="1">Homotetramer; dimer of dimers.</text>
</comment>
<comment type="subcellular location">
    <subcellularLocation>
        <location evidence="1">Cytoplasm</location>
    </subcellularLocation>
</comment>
<comment type="similarity">
    <text evidence="1">Belongs to the DapA family.</text>
</comment>
<comment type="caution">
    <text evidence="2">Was originally thought to be a dihydrodipicolinate synthase (DHDPS), catalyzing the condensation of (S)-aspartate-beta-semialdehyde [(S)-ASA] and pyruvate to dihydrodipicolinate (DHDP). However, it was shown in E.coli that the product of the enzymatic reaction is not dihydrodipicolinate but in fact (4S)-4-hydroxy-2,3,4,5-tetrahydro-(2S)-dipicolinic acid (HTPA), and that the consecutive dehydration reaction leading to DHDP is not spontaneous but catalyzed by DapB.</text>
</comment>
<gene>
    <name evidence="1" type="primary">dapA</name>
    <name type="ordered locus">BQ04190</name>
</gene>